<reference key="1">
    <citation type="journal article" date="1991" name="EMBO J.">
        <title>LFB3, a heterodimer-forming homeoprotein of the LFB1 family, is expressed in specialized epithelia.</title>
        <authorList>
            <person name="de Simone V."/>
            <person name="de Magistris L."/>
            <person name="Lazzaro L."/>
            <person name="Gerstner J."/>
            <person name="Monaci P."/>
            <person name="Nicosia A."/>
            <person name="Cortese R."/>
        </authorList>
    </citation>
    <scope>NUCLEOTIDE SEQUENCE [MRNA] (ISOFORM 1)</scope>
</reference>
<reference key="2">
    <citation type="journal article" date="1999" name="Diabetes">
        <title>Genetic analysis of late-onset type 2 diabetes in a mouse model of human complex trait.</title>
        <authorList>
            <person name="Ueda H."/>
            <person name="Ikegami H."/>
            <person name="Kawaguchi Y."/>
            <person name="Fujisawa T."/>
            <person name="Yamato E."/>
            <person name="Shibata M."/>
            <person name="Ogihara T."/>
        </authorList>
    </citation>
    <scope>NUCLEOTIDE SEQUENCE [MRNA] (ISOFORMS 1 AND 2)</scope>
    <scope>VARIANT ALA-222</scope>
    <source>
        <strain>C3H/HeJ</strain>
        <strain>NSY</strain>
        <tissue>Kidney</tissue>
    </source>
</reference>
<reference key="3">
    <citation type="journal article" date="2001" name="Endocr. J.">
        <title>Sequence analysis of candidate genes for common susceptibility to type 1 and type 2 diabetes in mice.</title>
        <authorList>
            <person name="Yamada K."/>
            <person name="Ikegami H."/>
            <person name="Kawaguchi Y."/>
            <person name="Fujisawa T."/>
            <person name="Hotta M."/>
            <person name="Ueda H."/>
            <person name="Shintani M."/>
            <person name="Nojima K."/>
            <person name="Kawabata Y."/>
            <person name="Ono M."/>
            <person name="Nishino M."/>
            <person name="Itoi M."/>
            <person name="Babaya N."/>
            <person name="Shibata M."/>
            <person name="Makino S."/>
            <person name="Ogihara T."/>
        </authorList>
    </citation>
    <scope>NUCLEOTIDE SEQUENCE [MRNA] (ISOFORM 1)</scope>
    <scope>VARIANT ALA-222</scope>
    <source>
        <strain>C3H/HeJ</strain>
        <strain>NOD</strain>
        <strain>NSY</strain>
    </source>
</reference>
<reference key="4">
    <citation type="journal article" date="2005" name="Science">
        <title>The transcriptional landscape of the mammalian genome.</title>
        <authorList>
            <person name="Carninci P."/>
            <person name="Kasukawa T."/>
            <person name="Katayama S."/>
            <person name="Gough J."/>
            <person name="Frith M.C."/>
            <person name="Maeda N."/>
            <person name="Oyama R."/>
            <person name="Ravasi T."/>
            <person name="Lenhard B."/>
            <person name="Wells C."/>
            <person name="Kodzius R."/>
            <person name="Shimokawa K."/>
            <person name="Bajic V.B."/>
            <person name="Brenner S.E."/>
            <person name="Batalov S."/>
            <person name="Forrest A.R."/>
            <person name="Zavolan M."/>
            <person name="Davis M.J."/>
            <person name="Wilming L.G."/>
            <person name="Aidinis V."/>
            <person name="Allen J.E."/>
            <person name="Ambesi-Impiombato A."/>
            <person name="Apweiler R."/>
            <person name="Aturaliya R.N."/>
            <person name="Bailey T.L."/>
            <person name="Bansal M."/>
            <person name="Baxter L."/>
            <person name="Beisel K.W."/>
            <person name="Bersano T."/>
            <person name="Bono H."/>
            <person name="Chalk A.M."/>
            <person name="Chiu K.P."/>
            <person name="Choudhary V."/>
            <person name="Christoffels A."/>
            <person name="Clutterbuck D.R."/>
            <person name="Crowe M.L."/>
            <person name="Dalla E."/>
            <person name="Dalrymple B.P."/>
            <person name="de Bono B."/>
            <person name="Della Gatta G."/>
            <person name="di Bernardo D."/>
            <person name="Down T."/>
            <person name="Engstrom P."/>
            <person name="Fagiolini M."/>
            <person name="Faulkner G."/>
            <person name="Fletcher C.F."/>
            <person name="Fukushima T."/>
            <person name="Furuno M."/>
            <person name="Futaki S."/>
            <person name="Gariboldi M."/>
            <person name="Georgii-Hemming P."/>
            <person name="Gingeras T.R."/>
            <person name="Gojobori T."/>
            <person name="Green R.E."/>
            <person name="Gustincich S."/>
            <person name="Harbers M."/>
            <person name="Hayashi Y."/>
            <person name="Hensch T.K."/>
            <person name="Hirokawa N."/>
            <person name="Hill D."/>
            <person name="Huminiecki L."/>
            <person name="Iacono M."/>
            <person name="Ikeo K."/>
            <person name="Iwama A."/>
            <person name="Ishikawa T."/>
            <person name="Jakt M."/>
            <person name="Kanapin A."/>
            <person name="Katoh M."/>
            <person name="Kawasawa Y."/>
            <person name="Kelso J."/>
            <person name="Kitamura H."/>
            <person name="Kitano H."/>
            <person name="Kollias G."/>
            <person name="Krishnan S.P."/>
            <person name="Kruger A."/>
            <person name="Kummerfeld S.K."/>
            <person name="Kurochkin I.V."/>
            <person name="Lareau L.F."/>
            <person name="Lazarevic D."/>
            <person name="Lipovich L."/>
            <person name="Liu J."/>
            <person name="Liuni S."/>
            <person name="McWilliam S."/>
            <person name="Madan Babu M."/>
            <person name="Madera M."/>
            <person name="Marchionni L."/>
            <person name="Matsuda H."/>
            <person name="Matsuzawa S."/>
            <person name="Miki H."/>
            <person name="Mignone F."/>
            <person name="Miyake S."/>
            <person name="Morris K."/>
            <person name="Mottagui-Tabar S."/>
            <person name="Mulder N."/>
            <person name="Nakano N."/>
            <person name="Nakauchi H."/>
            <person name="Ng P."/>
            <person name="Nilsson R."/>
            <person name="Nishiguchi S."/>
            <person name="Nishikawa S."/>
            <person name="Nori F."/>
            <person name="Ohara O."/>
            <person name="Okazaki Y."/>
            <person name="Orlando V."/>
            <person name="Pang K.C."/>
            <person name="Pavan W.J."/>
            <person name="Pavesi G."/>
            <person name="Pesole G."/>
            <person name="Petrovsky N."/>
            <person name="Piazza S."/>
            <person name="Reed J."/>
            <person name="Reid J.F."/>
            <person name="Ring B.Z."/>
            <person name="Ringwald M."/>
            <person name="Rost B."/>
            <person name="Ruan Y."/>
            <person name="Salzberg S.L."/>
            <person name="Sandelin A."/>
            <person name="Schneider C."/>
            <person name="Schoenbach C."/>
            <person name="Sekiguchi K."/>
            <person name="Semple C.A."/>
            <person name="Seno S."/>
            <person name="Sessa L."/>
            <person name="Sheng Y."/>
            <person name="Shibata Y."/>
            <person name="Shimada H."/>
            <person name="Shimada K."/>
            <person name="Silva D."/>
            <person name="Sinclair B."/>
            <person name="Sperling S."/>
            <person name="Stupka E."/>
            <person name="Sugiura K."/>
            <person name="Sultana R."/>
            <person name="Takenaka Y."/>
            <person name="Taki K."/>
            <person name="Tammoja K."/>
            <person name="Tan S.L."/>
            <person name="Tang S."/>
            <person name="Taylor M.S."/>
            <person name="Tegner J."/>
            <person name="Teichmann S.A."/>
            <person name="Ueda H.R."/>
            <person name="van Nimwegen E."/>
            <person name="Verardo R."/>
            <person name="Wei C.L."/>
            <person name="Yagi K."/>
            <person name="Yamanishi H."/>
            <person name="Zabarovsky E."/>
            <person name="Zhu S."/>
            <person name="Zimmer A."/>
            <person name="Hide W."/>
            <person name="Bult C."/>
            <person name="Grimmond S.M."/>
            <person name="Teasdale R.D."/>
            <person name="Liu E.T."/>
            <person name="Brusic V."/>
            <person name="Quackenbush J."/>
            <person name="Wahlestedt C."/>
            <person name="Mattick J.S."/>
            <person name="Hume D.A."/>
            <person name="Kai C."/>
            <person name="Sasaki D."/>
            <person name="Tomaru Y."/>
            <person name="Fukuda S."/>
            <person name="Kanamori-Katayama M."/>
            <person name="Suzuki M."/>
            <person name="Aoki J."/>
            <person name="Arakawa T."/>
            <person name="Iida J."/>
            <person name="Imamura K."/>
            <person name="Itoh M."/>
            <person name="Kato T."/>
            <person name="Kawaji H."/>
            <person name="Kawagashira N."/>
            <person name="Kawashima T."/>
            <person name="Kojima M."/>
            <person name="Kondo S."/>
            <person name="Konno H."/>
            <person name="Nakano K."/>
            <person name="Ninomiya N."/>
            <person name="Nishio T."/>
            <person name="Okada M."/>
            <person name="Plessy C."/>
            <person name="Shibata K."/>
            <person name="Shiraki T."/>
            <person name="Suzuki S."/>
            <person name="Tagami M."/>
            <person name="Waki K."/>
            <person name="Watahiki A."/>
            <person name="Okamura-Oho Y."/>
            <person name="Suzuki H."/>
            <person name="Kawai J."/>
            <person name="Hayashizaki Y."/>
        </authorList>
    </citation>
    <scope>NUCLEOTIDE SEQUENCE [LARGE SCALE MRNA] (ISOFORMS 1 AND 4)</scope>
    <source>
        <strain>C57BL/6J</strain>
        <tissue>Embryo</tissue>
        <tissue>Liver</tissue>
    </source>
</reference>
<reference key="5">
    <citation type="journal article" date="2009" name="PLoS Biol.">
        <title>Lineage-specific biology revealed by a finished genome assembly of the mouse.</title>
        <authorList>
            <person name="Church D.M."/>
            <person name="Goodstadt L."/>
            <person name="Hillier L.W."/>
            <person name="Zody M.C."/>
            <person name="Goldstein S."/>
            <person name="She X."/>
            <person name="Bult C.J."/>
            <person name="Agarwala R."/>
            <person name="Cherry J.L."/>
            <person name="DiCuccio M."/>
            <person name="Hlavina W."/>
            <person name="Kapustin Y."/>
            <person name="Meric P."/>
            <person name="Maglott D."/>
            <person name="Birtle Z."/>
            <person name="Marques A.C."/>
            <person name="Graves T."/>
            <person name="Zhou S."/>
            <person name="Teague B."/>
            <person name="Potamousis K."/>
            <person name="Churas C."/>
            <person name="Place M."/>
            <person name="Herschleb J."/>
            <person name="Runnheim R."/>
            <person name="Forrest D."/>
            <person name="Amos-Landgraf J."/>
            <person name="Schwartz D.C."/>
            <person name="Cheng Z."/>
            <person name="Lindblad-Toh K."/>
            <person name="Eichler E.E."/>
            <person name="Ponting C.P."/>
        </authorList>
    </citation>
    <scope>NUCLEOTIDE SEQUENCE [LARGE SCALE GENOMIC DNA]</scope>
    <source>
        <strain>C57BL/6J</strain>
    </source>
</reference>
<reference key="6">
    <citation type="journal article" date="2004" name="Genome Res.">
        <title>The status, quality, and expansion of the NIH full-length cDNA project: the Mammalian Gene Collection (MGC).</title>
        <authorList>
            <consortium name="The MGC Project Team"/>
        </authorList>
    </citation>
    <scope>NUCLEOTIDE SEQUENCE [LARGE SCALE MRNA] (ISOFORM 3)</scope>
    <source>
        <tissue>Kidney</tissue>
    </source>
</reference>
<reference key="7">
    <citation type="journal article" date="2007" name="Proc. Natl. Acad. Sci. U.S.A.">
        <title>Large-scale phosphorylation analysis of mouse liver.</title>
        <authorList>
            <person name="Villen J."/>
            <person name="Beausoleil S.A."/>
            <person name="Gerber S.A."/>
            <person name="Gygi S.P."/>
        </authorList>
    </citation>
    <scope>IDENTIFICATION BY MASS SPECTROMETRY [LARGE SCALE ANALYSIS]</scope>
    <source>
        <tissue>Liver</tissue>
    </source>
</reference>
<reference key="8">
    <citation type="journal article" date="2010" name="Cell">
        <title>A tissue-specific atlas of mouse protein phosphorylation and expression.</title>
        <authorList>
            <person name="Huttlin E.L."/>
            <person name="Jedrychowski M.P."/>
            <person name="Elias J.E."/>
            <person name="Goswami T."/>
            <person name="Rad R."/>
            <person name="Beausoleil S.A."/>
            <person name="Villen J."/>
            <person name="Haas W."/>
            <person name="Sowa M.E."/>
            <person name="Gygi S.P."/>
        </authorList>
    </citation>
    <scope>PHOSPHORYLATION [LARGE SCALE ANALYSIS] AT SER-49; SER-52; SER-75 AND SER-80</scope>
    <scope>IDENTIFICATION BY MASS SPECTROMETRY [LARGE SCALE ANALYSIS]</scope>
    <source>
        <tissue>Kidney</tissue>
        <tissue>Pancreas</tissue>
    </source>
</reference>
<comment type="function">
    <text evidence="2 3">Transcription factor that binds to the inverted palindrome 5'-GTTAATNATTAAC-3' (By similarity). Binds to the FPC element in the cAMP regulatory unit of the PLAU gene (By similarity). Transcriptional activity is increased by coactivator PCBD1 (By similarity).</text>
</comment>
<comment type="subunit">
    <text evidence="2">Binds DNA as a dimer. Can form homodimer or heterodimer with HNF1-alpha (By similarity). Interacts (via HNF-p1 domain) with PCBD1; the interaction increases its transactivation activity (By similarity).</text>
</comment>
<comment type="subcellular location">
    <subcellularLocation>
        <location>Nucleus</location>
    </subcellularLocation>
</comment>
<comment type="alternative products">
    <event type="alternative splicing"/>
    <isoform>
        <id>P27889-1</id>
        <name>1</name>
        <sequence type="displayed"/>
    </isoform>
    <isoform>
        <id>P27889-2</id>
        <name>2</name>
        <sequence type="described" ref="VSP_007100"/>
    </isoform>
    <isoform>
        <id>P27889-3</id>
        <name>3</name>
        <sequence type="described" ref="VSP_007099"/>
    </isoform>
    <isoform>
        <id>P27889-4</id>
        <name>4</name>
        <sequence type="described" ref="VSP_007099 VSP_007100"/>
    </isoform>
</comment>
<comment type="similarity">
    <text evidence="13">Belongs to the HNF1 homeobox family.</text>
</comment>
<comment type="sequence caution" evidence="13">
    <conflict type="erroneous initiation">
        <sequence resource="EMBL-CDS" id="BAB31632"/>
    </conflict>
</comment>
<accession>P27889</accession>
<accession>Q5NC37</accession>
<accession>Q8R162</accession>
<accession>Q9CS26</accession>
<accession>Q9R1W1</accession>
<accession>Q9R1W2</accession>
<accession>Q9WTL5</accession>
<accession>Q9WTL6</accession>
<name>HNF1B_MOUSE</name>
<gene>
    <name type="primary">Hnf1b</name>
    <name type="synonym">Hnf-1b</name>
    <name type="synonym">Tcf2</name>
</gene>
<feature type="chain" id="PRO_0000049122" description="Hepatocyte nuclear factor 1-beta">
    <location>
        <begin position="1"/>
        <end position="558"/>
    </location>
</feature>
<feature type="domain" description="HNF-p1" evidence="6">
    <location>
        <begin position="1"/>
        <end position="32"/>
    </location>
</feature>
<feature type="domain" description="POU-specific atypical" evidence="5">
    <location>
        <begin position="93"/>
        <end position="188"/>
    </location>
</feature>
<feature type="DNA-binding region" description="Homeobox; HNF1-type" evidence="4">
    <location>
        <begin position="231"/>
        <end position="311"/>
    </location>
</feature>
<feature type="region of interest" description="Dimerization" evidence="1">
    <location>
        <begin position="1"/>
        <end position="31"/>
    </location>
</feature>
<feature type="region of interest" description="Disordered" evidence="7">
    <location>
        <begin position="66"/>
        <end position="85"/>
    </location>
</feature>
<feature type="region of interest" description="Disordered" evidence="7">
    <location>
        <begin position="323"/>
        <end position="348"/>
    </location>
</feature>
<feature type="modified residue" description="Phosphoserine" evidence="14">
    <location>
        <position position="49"/>
    </location>
</feature>
<feature type="modified residue" description="Phosphoserine" evidence="14">
    <location>
        <position position="52"/>
    </location>
</feature>
<feature type="modified residue" description="Phosphoserine" evidence="14">
    <location>
        <position position="75"/>
    </location>
</feature>
<feature type="modified residue" description="Phosphoserine" evidence="14">
    <location>
        <position position="80"/>
    </location>
</feature>
<feature type="splice variant" id="VSP_007099" description="In isoform 3 and isoform 4." evidence="11 12">
    <location>
        <begin position="1"/>
        <end position="123"/>
    </location>
</feature>
<feature type="splice variant" id="VSP_007100" description="In isoform 2 and isoform 4." evidence="10 12">
    <location>
        <begin position="183"/>
        <end position="208"/>
    </location>
</feature>
<feature type="sequence variant" description="In strain: NSY." evidence="8 9">
    <original>T</original>
    <variation>A</variation>
    <location>
        <position position="222"/>
    </location>
</feature>
<feature type="sequence conflict" description="In Ref. 4; BAB31632." evidence="13" ref="4">
    <original>N</original>
    <variation>S</variation>
    <location>
        <position position="67"/>
    </location>
</feature>
<feature type="sequence conflict" description="In Ref. 1; CAA39358." evidence="13" ref="1">
    <original>LSHHNPQ</original>
    <variation>THSPPQSP</variation>
    <location>
        <begin position="423"/>
        <end position="429"/>
    </location>
</feature>
<feature type="sequence conflict" description="In Ref. 1; CAA39358." evidence="13" ref="1">
    <original>PP</original>
    <variation>HT</variation>
    <location>
        <begin position="520"/>
        <end position="521"/>
    </location>
</feature>
<sequence length="558" mass="61588">MVSKLTSLQQELLSALLSSGVTKEVLIQALEELLPSPNFGVKLETLPLSPGSGADLDTKPVFHTLTNGHAKGRLSGDEGSEDGDDYDTPPILKELQALNTEEAAEQRAEVDRMLSEDPWRAAKMIKGYMQQHNIPQREVVDVTGLNQSHLSQHLNKGTPMKTQKRAALYTWYVRKQREILRQFNQTVQSSGNMTDKSSQDQLLFLFPEFSQQNQGPGQSEDTCSEPTNKKMRRNRFKWGPASQQILYQAYDRQKNPSKEEREALVEECNRAECLQRGVSPSKAHGLGSNLVTEVRVYNWFANRRKEEAFRQKLAMDAYSSNQTHNLNPLLTHGSPHHQPSSSPPNKMSGVRYNQPGNNEVTSSSTISHHGNSAMVTSQSVLQQVSPASLDPGHSLLSPDSKMQITVSGGGLPPVSTLTNIHSLSHHNPQQSQNLIMTPLSGVMAIAQSLNTSQAQGVPVINSVASSLAALQPVQFSQQLHSPHQQPLMQQSPGSHMAQQPFMAAVTQLQNSHMYAHKQEPPQYSHTSRFPSAMVVTDTSSINTLTSMSSSKQCPLQAW</sequence>
<keyword id="KW-0010">Activator</keyword>
<keyword id="KW-0025">Alternative splicing</keyword>
<keyword id="KW-0238">DNA-binding</keyword>
<keyword id="KW-0371">Homeobox</keyword>
<keyword id="KW-0539">Nucleus</keyword>
<keyword id="KW-0597">Phosphoprotein</keyword>
<keyword id="KW-1185">Reference proteome</keyword>
<keyword id="KW-0804">Transcription</keyword>
<keyword id="KW-0805">Transcription regulation</keyword>
<protein>
    <recommendedName>
        <fullName>Hepatocyte nuclear factor 1-beta</fullName>
        <shortName>HNF-1-beta</shortName>
        <shortName>HNF-1B</shortName>
    </recommendedName>
    <alternativeName>
        <fullName>Homeoprotein LFB3</fullName>
    </alternativeName>
    <alternativeName>
        <fullName>Transcription factor 2</fullName>
        <shortName>TCF-2</shortName>
    </alternativeName>
</protein>
<organism>
    <name type="scientific">Mus musculus</name>
    <name type="common">Mouse</name>
    <dbReference type="NCBI Taxonomy" id="10090"/>
    <lineage>
        <taxon>Eukaryota</taxon>
        <taxon>Metazoa</taxon>
        <taxon>Chordata</taxon>
        <taxon>Craniata</taxon>
        <taxon>Vertebrata</taxon>
        <taxon>Euteleostomi</taxon>
        <taxon>Mammalia</taxon>
        <taxon>Eutheria</taxon>
        <taxon>Euarchontoglires</taxon>
        <taxon>Glires</taxon>
        <taxon>Rodentia</taxon>
        <taxon>Myomorpha</taxon>
        <taxon>Muroidea</taxon>
        <taxon>Muridae</taxon>
        <taxon>Murinae</taxon>
        <taxon>Mus</taxon>
        <taxon>Mus</taxon>
    </lineage>
</organism>
<dbReference type="EMBL" id="X55842">
    <property type="protein sequence ID" value="CAA39358.1"/>
    <property type="molecule type" value="mRNA"/>
</dbReference>
<dbReference type="EMBL" id="AB008174">
    <property type="protein sequence ID" value="BAA77718.1"/>
    <property type="molecule type" value="mRNA"/>
</dbReference>
<dbReference type="EMBL" id="AB008175">
    <property type="protein sequence ID" value="BAA77719.1"/>
    <property type="molecule type" value="mRNA"/>
</dbReference>
<dbReference type="EMBL" id="AB008176">
    <property type="protein sequence ID" value="BAA77720.1"/>
    <property type="molecule type" value="mRNA"/>
</dbReference>
<dbReference type="EMBL" id="AB008177">
    <property type="protein sequence ID" value="BAA77721.1"/>
    <property type="molecule type" value="mRNA"/>
</dbReference>
<dbReference type="EMBL" id="AB052659">
    <property type="protein sequence ID" value="BAB60814.1"/>
    <property type="molecule type" value="mRNA"/>
</dbReference>
<dbReference type="EMBL" id="AK004837">
    <property type="protein sequence ID" value="BAB23604.1"/>
    <property type="molecule type" value="mRNA"/>
</dbReference>
<dbReference type="EMBL" id="AK019258">
    <property type="protein sequence ID" value="BAB31632.2"/>
    <property type="status" value="ALT_INIT"/>
    <property type="molecule type" value="mRNA"/>
</dbReference>
<dbReference type="EMBL" id="AL669868">
    <property type="status" value="NOT_ANNOTATED_CDS"/>
    <property type="molecule type" value="Genomic_DNA"/>
</dbReference>
<dbReference type="EMBL" id="BC025189">
    <property type="protein sequence ID" value="AAH25189.1"/>
    <property type="molecule type" value="mRNA"/>
</dbReference>
<dbReference type="CCDS" id="CCDS25179.1">
    <molecule id="P27889-1"/>
</dbReference>
<dbReference type="CCDS" id="CCDS70271.1">
    <molecule id="P27889-2"/>
</dbReference>
<dbReference type="CCDS" id="CCDS70272.1">
    <molecule id="P27889-3"/>
</dbReference>
<dbReference type="PIR" id="A39633">
    <property type="entry name" value="A39633"/>
</dbReference>
<dbReference type="RefSeq" id="NP_001278197.1">
    <molecule id="P27889-2"/>
    <property type="nucleotide sequence ID" value="NM_001291268.1"/>
</dbReference>
<dbReference type="RefSeq" id="NP_001278198.1">
    <molecule id="P27889-3"/>
    <property type="nucleotide sequence ID" value="NM_001291269.1"/>
</dbReference>
<dbReference type="RefSeq" id="NP_033356.2">
    <molecule id="P27889-1"/>
    <property type="nucleotide sequence ID" value="NM_009330.3"/>
</dbReference>
<dbReference type="RefSeq" id="XP_006532859.1">
    <molecule id="P27889-3"/>
    <property type="nucleotide sequence ID" value="XM_006532796.4"/>
</dbReference>
<dbReference type="BMRB" id="P27889"/>
<dbReference type="SMR" id="P27889"/>
<dbReference type="BioGRID" id="204003">
    <property type="interactions" value="5"/>
</dbReference>
<dbReference type="FunCoup" id="P27889">
    <property type="interactions" value="1003"/>
</dbReference>
<dbReference type="IntAct" id="P27889">
    <property type="interactions" value="1"/>
</dbReference>
<dbReference type="STRING" id="10090.ENSMUSP00000021016"/>
<dbReference type="iPTMnet" id="P27889"/>
<dbReference type="PhosphoSitePlus" id="P27889"/>
<dbReference type="PaxDb" id="10090-ENSMUSP00000021016"/>
<dbReference type="PeptideAtlas" id="P27889"/>
<dbReference type="ProteomicsDB" id="273154">
    <molecule id="P27889-1"/>
</dbReference>
<dbReference type="ProteomicsDB" id="273155">
    <molecule id="P27889-2"/>
</dbReference>
<dbReference type="ProteomicsDB" id="273156">
    <molecule id="P27889-3"/>
</dbReference>
<dbReference type="ProteomicsDB" id="273157">
    <molecule id="P27889-4"/>
</dbReference>
<dbReference type="Antibodypedia" id="72795">
    <property type="antibodies" value="546 antibodies from 38 providers"/>
</dbReference>
<dbReference type="DNASU" id="21410"/>
<dbReference type="Ensembl" id="ENSMUST00000021016.10">
    <molecule id="P27889-1"/>
    <property type="protein sequence ID" value="ENSMUSP00000021016.3"/>
    <property type="gene ID" value="ENSMUSG00000020679.12"/>
</dbReference>
<dbReference type="Ensembl" id="ENSMUST00000108113.3">
    <molecule id="P27889-3"/>
    <property type="protein sequence ID" value="ENSMUSP00000103748.2"/>
    <property type="gene ID" value="ENSMUSG00000020679.12"/>
</dbReference>
<dbReference type="Ensembl" id="ENSMUST00000108114.9">
    <molecule id="P27889-2"/>
    <property type="protein sequence ID" value="ENSMUSP00000103749.3"/>
    <property type="gene ID" value="ENSMUSG00000020679.12"/>
</dbReference>
<dbReference type="GeneID" id="21410"/>
<dbReference type="KEGG" id="mmu:21410"/>
<dbReference type="UCSC" id="uc007kpx.2">
    <molecule id="P27889-1"/>
    <property type="organism name" value="mouse"/>
</dbReference>
<dbReference type="UCSC" id="uc007kpy.2">
    <molecule id="P27889-2"/>
    <property type="organism name" value="mouse"/>
</dbReference>
<dbReference type="AGR" id="MGI:98505"/>
<dbReference type="CTD" id="6928"/>
<dbReference type="MGI" id="MGI:98505">
    <property type="gene designation" value="Hnf1b"/>
</dbReference>
<dbReference type="VEuPathDB" id="HostDB:ENSMUSG00000020679"/>
<dbReference type="eggNOG" id="ENOG502QRPW">
    <property type="taxonomic scope" value="Eukaryota"/>
</dbReference>
<dbReference type="GeneTree" id="ENSGT00940000153818"/>
<dbReference type="HOGENOM" id="CLU_035503_0_0_1"/>
<dbReference type="InParanoid" id="P27889"/>
<dbReference type="OMA" id="GQSDDTC"/>
<dbReference type="OrthoDB" id="10069265at2759"/>
<dbReference type="PhylomeDB" id="P27889"/>
<dbReference type="TreeFam" id="TF320327"/>
<dbReference type="BioGRID-ORCS" id="21410">
    <property type="hits" value="5 hits in 79 CRISPR screens"/>
</dbReference>
<dbReference type="ChiTaRS" id="Hnf1b">
    <property type="organism name" value="mouse"/>
</dbReference>
<dbReference type="PRO" id="PR:P27889"/>
<dbReference type="Proteomes" id="UP000000589">
    <property type="component" value="Chromosome 11"/>
</dbReference>
<dbReference type="RNAct" id="P27889">
    <property type="molecule type" value="protein"/>
</dbReference>
<dbReference type="Bgee" id="ENSMUSG00000020679">
    <property type="expression patterns" value="Expressed in right kidney and 139 other cell types or tissues"/>
</dbReference>
<dbReference type="ExpressionAtlas" id="P27889">
    <property type="expression patterns" value="baseline and differential"/>
</dbReference>
<dbReference type="GO" id="GO:0005829">
    <property type="term" value="C:cytosol"/>
    <property type="evidence" value="ECO:0007669"/>
    <property type="project" value="Ensembl"/>
</dbReference>
<dbReference type="GO" id="GO:0005654">
    <property type="term" value="C:nucleoplasm"/>
    <property type="evidence" value="ECO:0000304"/>
    <property type="project" value="Reactome"/>
</dbReference>
<dbReference type="GO" id="GO:0005634">
    <property type="term" value="C:nucleus"/>
    <property type="evidence" value="ECO:0000314"/>
    <property type="project" value="MGI"/>
</dbReference>
<dbReference type="GO" id="GO:0005667">
    <property type="term" value="C:transcription regulator complex"/>
    <property type="evidence" value="ECO:0000353"/>
    <property type="project" value="MGI"/>
</dbReference>
<dbReference type="GO" id="GO:0000987">
    <property type="term" value="F:cis-regulatory region sequence-specific DNA binding"/>
    <property type="evidence" value="ECO:0000314"/>
    <property type="project" value="MGI"/>
</dbReference>
<dbReference type="GO" id="GO:0003677">
    <property type="term" value="F:DNA binding"/>
    <property type="evidence" value="ECO:0000314"/>
    <property type="project" value="MGI"/>
</dbReference>
<dbReference type="GO" id="GO:0003700">
    <property type="term" value="F:DNA-binding transcription factor activity"/>
    <property type="evidence" value="ECO:0000314"/>
    <property type="project" value="UniProtKB"/>
</dbReference>
<dbReference type="GO" id="GO:0000981">
    <property type="term" value="F:DNA-binding transcription factor activity, RNA polymerase II-specific"/>
    <property type="evidence" value="ECO:0000314"/>
    <property type="project" value="MGI"/>
</dbReference>
<dbReference type="GO" id="GO:0042802">
    <property type="term" value="F:identical protein binding"/>
    <property type="evidence" value="ECO:0000353"/>
    <property type="project" value="MGI"/>
</dbReference>
<dbReference type="GO" id="GO:1990841">
    <property type="term" value="F:promoter-specific chromatin binding"/>
    <property type="evidence" value="ECO:0000314"/>
    <property type="project" value="MGI"/>
</dbReference>
<dbReference type="GO" id="GO:0042803">
    <property type="term" value="F:protein homodimerization activity"/>
    <property type="evidence" value="ECO:0000250"/>
    <property type="project" value="UniProtKB"/>
</dbReference>
<dbReference type="GO" id="GO:0000976">
    <property type="term" value="F:transcription cis-regulatory region binding"/>
    <property type="evidence" value="ECO:0000314"/>
    <property type="project" value="MGI"/>
</dbReference>
<dbReference type="GO" id="GO:0009952">
    <property type="term" value="P:anterior/posterior pattern specification"/>
    <property type="evidence" value="ECO:0000315"/>
    <property type="project" value="MGI"/>
</dbReference>
<dbReference type="GO" id="GO:0006915">
    <property type="term" value="P:apoptotic process"/>
    <property type="evidence" value="ECO:0000315"/>
    <property type="project" value="MGI"/>
</dbReference>
<dbReference type="GO" id="GO:0048754">
    <property type="term" value="P:branching morphogenesis of an epithelial tube"/>
    <property type="evidence" value="ECO:0000315"/>
    <property type="project" value="MGI"/>
</dbReference>
<dbReference type="GO" id="GO:0048557">
    <property type="term" value="P:embryonic digestive tract morphogenesis"/>
    <property type="evidence" value="ECO:0000315"/>
    <property type="project" value="MGI"/>
</dbReference>
<dbReference type="GO" id="GO:0031018">
    <property type="term" value="P:endocrine pancreas development"/>
    <property type="evidence" value="ECO:0000250"/>
    <property type="project" value="UniProtKB"/>
</dbReference>
<dbReference type="GO" id="GO:0007492">
    <property type="term" value="P:endoderm development"/>
    <property type="evidence" value="ECO:0000315"/>
    <property type="project" value="MGI"/>
</dbReference>
<dbReference type="GO" id="GO:0001706">
    <property type="term" value="P:endoderm formation"/>
    <property type="evidence" value="ECO:0000266"/>
    <property type="project" value="MGI"/>
</dbReference>
<dbReference type="GO" id="GO:0001714">
    <property type="term" value="P:endodermal cell fate specification"/>
    <property type="evidence" value="ECO:0000315"/>
    <property type="project" value="MGI"/>
</dbReference>
<dbReference type="GO" id="GO:0050673">
    <property type="term" value="P:epithelial cell proliferation"/>
    <property type="evidence" value="ECO:0000315"/>
    <property type="project" value="MGI"/>
</dbReference>
<dbReference type="GO" id="GO:0060429">
    <property type="term" value="P:epithelium development"/>
    <property type="evidence" value="ECO:0000315"/>
    <property type="project" value="MGI"/>
</dbReference>
<dbReference type="GO" id="GO:0010467">
    <property type="term" value="P:gene expression"/>
    <property type="evidence" value="ECO:0000315"/>
    <property type="project" value="MGI"/>
</dbReference>
<dbReference type="GO" id="GO:0048806">
    <property type="term" value="P:genitalia development"/>
    <property type="evidence" value="ECO:0000250"/>
    <property type="project" value="UniProtKB"/>
</dbReference>
<dbReference type="GO" id="GO:0061017">
    <property type="term" value="P:hepatoblast differentiation"/>
    <property type="evidence" value="ECO:0000315"/>
    <property type="project" value="MGI"/>
</dbReference>
<dbReference type="GO" id="GO:0030902">
    <property type="term" value="P:hindbrain development"/>
    <property type="evidence" value="ECO:0000315"/>
    <property type="project" value="MGI"/>
</dbReference>
<dbReference type="GO" id="GO:0001826">
    <property type="term" value="P:inner cell mass cell differentiation"/>
    <property type="evidence" value="ECO:0000315"/>
    <property type="project" value="MGI"/>
</dbReference>
<dbReference type="GO" id="GO:0030073">
    <property type="term" value="P:insulin secretion"/>
    <property type="evidence" value="ECO:0000315"/>
    <property type="project" value="MGI"/>
</dbReference>
<dbReference type="GO" id="GO:0001822">
    <property type="term" value="P:kidney development"/>
    <property type="evidence" value="ECO:0000315"/>
    <property type="project" value="MGI"/>
</dbReference>
<dbReference type="GO" id="GO:0060993">
    <property type="term" value="P:kidney morphogenesis"/>
    <property type="evidence" value="ECO:0000316"/>
    <property type="project" value="MGI"/>
</dbReference>
<dbReference type="GO" id="GO:0001889">
    <property type="term" value="P:liver development"/>
    <property type="evidence" value="ECO:0000315"/>
    <property type="project" value="MGI"/>
</dbReference>
<dbReference type="GO" id="GO:1900200">
    <property type="term" value="P:mesenchymal cell apoptotic process involved in metanephros development"/>
    <property type="evidence" value="ECO:0000315"/>
    <property type="project" value="MGI"/>
</dbReference>
<dbReference type="GO" id="GO:0072177">
    <property type="term" value="P:mesonephric duct development"/>
    <property type="evidence" value="ECO:0000315"/>
    <property type="project" value="MGI"/>
</dbReference>
<dbReference type="GO" id="GO:0072181">
    <property type="term" value="P:mesonephric duct formation"/>
    <property type="evidence" value="ECO:0000315"/>
    <property type="project" value="MGI"/>
</dbReference>
<dbReference type="GO" id="GO:0072164">
    <property type="term" value="P:mesonephric tubule development"/>
    <property type="evidence" value="ECO:0000316"/>
    <property type="project" value="MGI"/>
</dbReference>
<dbReference type="GO" id="GO:0043066">
    <property type="term" value="P:negative regulation of apoptotic process"/>
    <property type="evidence" value="ECO:0000315"/>
    <property type="project" value="MGI"/>
</dbReference>
<dbReference type="GO" id="GO:0061296">
    <property type="term" value="P:negative regulation of mesenchymal cell apoptotic process involved in mesonephric nephron morphogenesis"/>
    <property type="evidence" value="ECO:0000315"/>
    <property type="project" value="MGI"/>
</dbReference>
<dbReference type="GO" id="GO:1900212">
    <property type="term" value="P:negative regulation of mesenchymal cell apoptotic process involved in metanephros development"/>
    <property type="evidence" value="ECO:0000315"/>
    <property type="project" value="MGI"/>
</dbReference>
<dbReference type="GO" id="GO:0000122">
    <property type="term" value="P:negative regulation of transcription by RNA polymerase II"/>
    <property type="evidence" value="ECO:0000314"/>
    <property type="project" value="MGI"/>
</dbReference>
<dbReference type="GO" id="GO:0072176">
    <property type="term" value="P:nephric duct development"/>
    <property type="evidence" value="ECO:0000315"/>
    <property type="project" value="MGI"/>
</dbReference>
<dbReference type="GO" id="GO:0072179">
    <property type="term" value="P:nephric duct formation"/>
    <property type="evidence" value="ECO:0000315"/>
    <property type="project" value="MGI"/>
</dbReference>
<dbReference type="GO" id="GO:0007219">
    <property type="term" value="P:Notch signaling pathway"/>
    <property type="evidence" value="ECO:0000314"/>
    <property type="project" value="MGI"/>
</dbReference>
<dbReference type="GO" id="GO:0045893">
    <property type="term" value="P:positive regulation of DNA-templated transcription"/>
    <property type="evidence" value="ECO:0000314"/>
    <property type="project" value="MGI"/>
</dbReference>
<dbReference type="GO" id="GO:0010628">
    <property type="term" value="P:positive regulation of gene expression"/>
    <property type="evidence" value="ECO:0000315"/>
    <property type="project" value="MGI"/>
</dbReference>
<dbReference type="GO" id="GO:0045944">
    <property type="term" value="P:positive regulation of transcription by RNA polymerase II"/>
    <property type="evidence" value="ECO:0000314"/>
    <property type="project" value="MGI"/>
</dbReference>
<dbReference type="GO" id="GO:0060261">
    <property type="term" value="P:positive regulation of transcription initiation by RNA polymerase II"/>
    <property type="evidence" value="ECO:0007669"/>
    <property type="project" value="Ensembl"/>
</dbReference>
<dbReference type="GO" id="GO:0039020">
    <property type="term" value="P:pronephric nephron tubule development"/>
    <property type="evidence" value="ECO:0007669"/>
    <property type="project" value="Ensembl"/>
</dbReference>
<dbReference type="GO" id="GO:0072095">
    <property type="term" value="P:regulation of branch elongation involved in ureteric bud branching"/>
    <property type="evidence" value="ECO:0000315"/>
    <property type="project" value="MGI"/>
</dbReference>
<dbReference type="GO" id="GO:0035565">
    <property type="term" value="P:regulation of pronephros size"/>
    <property type="evidence" value="ECO:0007669"/>
    <property type="project" value="Ensembl"/>
</dbReference>
<dbReference type="GO" id="GO:0030111">
    <property type="term" value="P:regulation of Wnt signaling pathway"/>
    <property type="evidence" value="ECO:0000315"/>
    <property type="project" value="MGI"/>
</dbReference>
<dbReference type="GO" id="GO:0009749">
    <property type="term" value="P:response to glucose"/>
    <property type="evidence" value="ECO:0000315"/>
    <property type="project" value="MGI"/>
</dbReference>
<dbReference type="GO" id="GO:0060677">
    <property type="term" value="P:ureteric bud elongation"/>
    <property type="evidence" value="ECO:0000315"/>
    <property type="project" value="MGI"/>
</dbReference>
<dbReference type="CDD" id="cd00086">
    <property type="entry name" value="homeodomain"/>
    <property type="match status" value="1"/>
</dbReference>
<dbReference type="FunFam" id="1.10.10.60:FF:000043">
    <property type="entry name" value="Hepatocyte nuclear factor 1-beta"/>
    <property type="match status" value="1"/>
</dbReference>
<dbReference type="FunFam" id="1.10.260.40:FF:000009">
    <property type="entry name" value="Hepatocyte nuclear factor 1-beta"/>
    <property type="match status" value="1"/>
</dbReference>
<dbReference type="Gene3D" id="1.10.10.60">
    <property type="entry name" value="Homeodomain-like"/>
    <property type="match status" value="1"/>
</dbReference>
<dbReference type="Gene3D" id="1.10.260.40">
    <property type="entry name" value="lambda repressor-like DNA-binding domains"/>
    <property type="match status" value="1"/>
</dbReference>
<dbReference type="InterPro" id="IPR001356">
    <property type="entry name" value="HD"/>
</dbReference>
<dbReference type="InterPro" id="IPR039066">
    <property type="entry name" value="HNF-1"/>
</dbReference>
<dbReference type="InterPro" id="IPR006899">
    <property type="entry name" value="HNF-1_N"/>
</dbReference>
<dbReference type="InterPro" id="IPR044869">
    <property type="entry name" value="HNF-1_POU"/>
</dbReference>
<dbReference type="InterPro" id="IPR023219">
    <property type="entry name" value="HNF1_dimer_N_dom_sf"/>
</dbReference>
<dbReference type="InterPro" id="IPR006897">
    <property type="entry name" value="HNF1b_C"/>
</dbReference>
<dbReference type="InterPro" id="IPR044866">
    <property type="entry name" value="HNF_P1"/>
</dbReference>
<dbReference type="InterPro" id="IPR009057">
    <property type="entry name" value="Homeodomain-like_sf"/>
</dbReference>
<dbReference type="InterPro" id="IPR010982">
    <property type="entry name" value="Lambda_DNA-bd_dom_sf"/>
</dbReference>
<dbReference type="PANTHER" id="PTHR11568">
    <property type="entry name" value="HEPATOCYTE NUCLEAR FACTOR 1"/>
    <property type="match status" value="1"/>
</dbReference>
<dbReference type="PANTHER" id="PTHR11568:SF2">
    <property type="entry name" value="HEPATOCYTE NUCLEAR FACTOR 1-BETA"/>
    <property type="match status" value="1"/>
</dbReference>
<dbReference type="Pfam" id="PF04814">
    <property type="entry name" value="HNF-1_N"/>
    <property type="match status" value="1"/>
</dbReference>
<dbReference type="Pfam" id="PF04812">
    <property type="entry name" value="HNF-1B_C"/>
    <property type="match status" value="1"/>
</dbReference>
<dbReference type="SMART" id="SM00389">
    <property type="entry name" value="HOX"/>
    <property type="match status" value="1"/>
</dbReference>
<dbReference type="SUPFAM" id="SSF100957">
    <property type="entry name" value="Dimerization cofactor of HNF-1 alpha"/>
    <property type="match status" value="1"/>
</dbReference>
<dbReference type="SUPFAM" id="SSF46689">
    <property type="entry name" value="Homeodomain-like"/>
    <property type="match status" value="1"/>
</dbReference>
<dbReference type="SUPFAM" id="SSF47413">
    <property type="entry name" value="lambda repressor-like DNA-binding domains"/>
    <property type="match status" value="1"/>
</dbReference>
<dbReference type="PROSITE" id="PS51937">
    <property type="entry name" value="HNF_P1"/>
    <property type="match status" value="1"/>
</dbReference>
<dbReference type="PROSITE" id="PS00027">
    <property type="entry name" value="HOMEOBOX_1"/>
    <property type="match status" value="1"/>
</dbReference>
<dbReference type="PROSITE" id="PS50071">
    <property type="entry name" value="HOMEOBOX_2"/>
    <property type="match status" value="1"/>
</dbReference>
<dbReference type="PROSITE" id="PS51936">
    <property type="entry name" value="POU_4"/>
    <property type="match status" value="1"/>
</dbReference>
<proteinExistence type="evidence at protein level"/>
<evidence type="ECO:0000250" key="1"/>
<evidence type="ECO:0000250" key="2">
    <source>
        <dbReference type="UniProtKB" id="P35680"/>
    </source>
</evidence>
<evidence type="ECO:0000250" key="3">
    <source>
        <dbReference type="UniProtKB" id="Q03365"/>
    </source>
</evidence>
<evidence type="ECO:0000255" key="4">
    <source>
        <dbReference type="PROSITE-ProRule" id="PRU00108"/>
    </source>
</evidence>
<evidence type="ECO:0000255" key="5">
    <source>
        <dbReference type="PROSITE-ProRule" id="PRU01285"/>
    </source>
</evidence>
<evidence type="ECO:0000255" key="6">
    <source>
        <dbReference type="PROSITE-ProRule" id="PRU01286"/>
    </source>
</evidence>
<evidence type="ECO:0000256" key="7">
    <source>
        <dbReference type="SAM" id="MobiDB-lite"/>
    </source>
</evidence>
<evidence type="ECO:0000269" key="8">
    <source>
    </source>
</evidence>
<evidence type="ECO:0000269" key="9">
    <source>
    </source>
</evidence>
<evidence type="ECO:0000303" key="10">
    <source>
    </source>
</evidence>
<evidence type="ECO:0000303" key="11">
    <source>
    </source>
</evidence>
<evidence type="ECO:0000303" key="12">
    <source>
    </source>
</evidence>
<evidence type="ECO:0000305" key="13"/>
<evidence type="ECO:0007744" key="14">
    <source>
    </source>
</evidence>